<feature type="chain" id="PRO_0000213597" description="Synaptosomal-associated protein 25-B">
    <location>
        <begin position="1"/>
        <end position="203"/>
    </location>
</feature>
<feature type="domain" description="t-SNARE coiled-coil homology 1" evidence="3">
    <location>
        <begin position="19"/>
        <end position="81"/>
    </location>
</feature>
<feature type="domain" description="t-SNARE coiled-coil homology 2" evidence="3">
    <location>
        <begin position="137"/>
        <end position="199"/>
    </location>
</feature>
<feature type="region of interest" description="Disordered" evidence="4">
    <location>
        <begin position="1"/>
        <end position="25"/>
    </location>
</feature>
<feature type="compositionally biased region" description="Basic and acidic residues" evidence="4">
    <location>
        <begin position="1"/>
        <end position="11"/>
    </location>
</feature>
<feature type="sequence conflict" description="In Ref. 2; AAT84082." evidence="5" ref="2">
    <original>K</original>
    <variation>R</variation>
    <location>
        <position position="94"/>
    </location>
</feature>
<gene>
    <name type="primary">snap25b</name>
    <name type="synonym">snap25.2</name>
</gene>
<comment type="function">
    <text>May play an important role in the synaptic function of specific neuronal systems. Associates with proteins involved in vesicle docking and membrane fusion.</text>
</comment>
<comment type="subcellular location">
    <subcellularLocation>
        <location evidence="1">Synapse</location>
        <location evidence="1">Synaptosome</location>
    </subcellularLocation>
    <subcellularLocation>
        <location evidence="2">Cell membrane</location>
    </subcellularLocation>
    <text>Complexed with macromolecular elements of the nerve terminal.</text>
</comment>
<comment type="similarity">
    <text evidence="5">Belongs to the SNAP-25 family.</text>
</comment>
<comment type="sequence caution" evidence="5">
    <conflict type="miscellaneous discrepancy">
        <sequence resource="EMBL-CDS" id="AAT84082"/>
    </conflict>
    <text>Contains an extended C-terminus due to missing residues in the underlying mRNA surrounding the stop codon.</text>
</comment>
<protein>
    <recommendedName>
        <fullName>Synaptosomal-associated protein 25-B</fullName>
        <shortName>SNAP-25B</shortName>
    </recommendedName>
    <alternativeName>
        <fullName>Synaptosome-associated protein 25.2</fullName>
        <shortName>SNAP-25.2</shortName>
    </alternativeName>
</protein>
<accession>P36978</accession>
<accession>Q4VS09</accession>
<name>SN25B_CARAU</name>
<keyword id="KW-1003">Cell membrane</keyword>
<keyword id="KW-0175">Coiled coil</keyword>
<keyword id="KW-0472">Membrane</keyword>
<keyword id="KW-1185">Reference proteome</keyword>
<keyword id="KW-0677">Repeat</keyword>
<keyword id="KW-0770">Synapse</keyword>
<keyword id="KW-0771">Synaptosome</keyword>
<proteinExistence type="evidence at transcript level"/>
<sequence>MADEADMRNELTDMQARADQLGDESLESTRRMLQLVEESKDAGIRTLVMLDEQGEQLERIEEGMDQINKDMKEAEKNLTDLGNLCGLCPCPCNKLKGGGQSWGNNQDGVVSSQPARVVDEREQMAISGGFIRRVTNDARENEMDENLEQVGSIIGNLRHMALDMGNEIDTQNRQIDRIMDMADSNKTRIDEANQRATKMLGSG</sequence>
<evidence type="ECO:0000250" key="1"/>
<evidence type="ECO:0000250" key="2">
    <source>
        <dbReference type="UniProtKB" id="P60881"/>
    </source>
</evidence>
<evidence type="ECO:0000255" key="3">
    <source>
        <dbReference type="PROSITE-ProRule" id="PRU00202"/>
    </source>
</evidence>
<evidence type="ECO:0000256" key="4">
    <source>
        <dbReference type="SAM" id="MobiDB-lite"/>
    </source>
</evidence>
<evidence type="ECO:0000305" key="5"/>
<organism>
    <name type="scientific">Carassius auratus</name>
    <name type="common">Goldfish</name>
    <dbReference type="NCBI Taxonomy" id="7957"/>
    <lineage>
        <taxon>Eukaryota</taxon>
        <taxon>Metazoa</taxon>
        <taxon>Chordata</taxon>
        <taxon>Craniata</taxon>
        <taxon>Vertebrata</taxon>
        <taxon>Euteleostomi</taxon>
        <taxon>Actinopterygii</taxon>
        <taxon>Neopterygii</taxon>
        <taxon>Teleostei</taxon>
        <taxon>Ostariophysi</taxon>
        <taxon>Cypriniformes</taxon>
        <taxon>Cyprinidae</taxon>
        <taxon>Cyprininae</taxon>
        <taxon>Carassius</taxon>
    </lineage>
</organism>
<dbReference type="EMBL" id="L22976">
    <property type="protein sequence ID" value="AAA16538.1"/>
    <property type="molecule type" value="mRNA"/>
</dbReference>
<dbReference type="EMBL" id="AY644725">
    <property type="protein sequence ID" value="AAT84082.1"/>
    <property type="status" value="ALT_SEQ"/>
    <property type="molecule type" value="mRNA"/>
</dbReference>
<dbReference type="PIR" id="I50481">
    <property type="entry name" value="I50481"/>
</dbReference>
<dbReference type="SMR" id="P36978"/>
<dbReference type="OrthoDB" id="19261at2759"/>
<dbReference type="Proteomes" id="UP000515129">
    <property type="component" value="Unplaced"/>
</dbReference>
<dbReference type="GO" id="GO:0005737">
    <property type="term" value="C:cytoplasm"/>
    <property type="evidence" value="ECO:0000250"/>
    <property type="project" value="UniProtKB"/>
</dbReference>
<dbReference type="GO" id="GO:0016020">
    <property type="term" value="C:membrane"/>
    <property type="evidence" value="ECO:0000250"/>
    <property type="project" value="UniProtKB"/>
</dbReference>
<dbReference type="GO" id="GO:0043005">
    <property type="term" value="C:neuron projection"/>
    <property type="evidence" value="ECO:0007669"/>
    <property type="project" value="UniProtKB-KW"/>
</dbReference>
<dbReference type="GO" id="GO:0005886">
    <property type="term" value="C:plasma membrane"/>
    <property type="evidence" value="ECO:0007669"/>
    <property type="project" value="UniProtKB-SubCell"/>
</dbReference>
<dbReference type="GO" id="GO:0098793">
    <property type="term" value="C:presynapse"/>
    <property type="evidence" value="ECO:0007669"/>
    <property type="project" value="GOC"/>
</dbReference>
<dbReference type="GO" id="GO:0031201">
    <property type="term" value="C:SNARE complex"/>
    <property type="evidence" value="ECO:0000250"/>
    <property type="project" value="UniProtKB"/>
</dbReference>
<dbReference type="GO" id="GO:0070032">
    <property type="term" value="C:synaptobrevin 2-SNAP-25-syntaxin-1a-complexin I complex"/>
    <property type="evidence" value="ECO:0007669"/>
    <property type="project" value="TreeGrafter"/>
</dbReference>
<dbReference type="GO" id="GO:0005484">
    <property type="term" value="F:SNAP receptor activity"/>
    <property type="evidence" value="ECO:0007669"/>
    <property type="project" value="TreeGrafter"/>
</dbReference>
<dbReference type="GO" id="GO:0017075">
    <property type="term" value="F:syntaxin-1 binding"/>
    <property type="evidence" value="ECO:0007669"/>
    <property type="project" value="InterPro"/>
</dbReference>
<dbReference type="GO" id="GO:0005249">
    <property type="term" value="F:voltage-gated potassium channel activity"/>
    <property type="evidence" value="ECO:0007669"/>
    <property type="project" value="InterPro"/>
</dbReference>
<dbReference type="GO" id="GO:0031629">
    <property type="term" value="P:synaptic vesicle fusion to presynaptic active zone membrane"/>
    <property type="evidence" value="ECO:0007669"/>
    <property type="project" value="TreeGrafter"/>
</dbReference>
<dbReference type="GO" id="GO:0016082">
    <property type="term" value="P:synaptic vesicle priming"/>
    <property type="evidence" value="ECO:0007669"/>
    <property type="project" value="TreeGrafter"/>
</dbReference>
<dbReference type="CDD" id="cd15885">
    <property type="entry name" value="SNARE_SNAP25C"/>
    <property type="match status" value="1"/>
</dbReference>
<dbReference type="CDD" id="cd15894">
    <property type="entry name" value="SNARE_SNAP25N"/>
    <property type="match status" value="1"/>
</dbReference>
<dbReference type="FunFam" id="1.20.5.110:FF:000007">
    <property type="entry name" value="Synaptosomal-associated protein"/>
    <property type="match status" value="1"/>
</dbReference>
<dbReference type="FunFam" id="1.20.5.110:FF:000009">
    <property type="entry name" value="Synaptosomal-associated protein"/>
    <property type="match status" value="1"/>
</dbReference>
<dbReference type="Gene3D" id="1.20.5.110">
    <property type="match status" value="2"/>
</dbReference>
<dbReference type="InterPro" id="IPR000928">
    <property type="entry name" value="SNAP-25_dom"/>
</dbReference>
<dbReference type="InterPro" id="IPR039077">
    <property type="entry name" value="SNAP-25_N_SNARE_chord"/>
</dbReference>
<dbReference type="InterPro" id="IPR000727">
    <property type="entry name" value="T_SNARE_dom"/>
</dbReference>
<dbReference type="PANTHER" id="PTHR19305">
    <property type="entry name" value="SYNAPTOSOMAL ASSOCIATED PROTEIN"/>
    <property type="match status" value="1"/>
</dbReference>
<dbReference type="PANTHER" id="PTHR19305:SF5">
    <property type="entry name" value="SYNAPTOSOMAL-ASSOCIATED PROTEIN 25"/>
    <property type="match status" value="1"/>
</dbReference>
<dbReference type="Pfam" id="PF00835">
    <property type="entry name" value="SNAP-25"/>
    <property type="match status" value="1"/>
</dbReference>
<dbReference type="SMART" id="SM00397">
    <property type="entry name" value="t_SNARE"/>
    <property type="match status" value="2"/>
</dbReference>
<dbReference type="SUPFAM" id="SSF58038">
    <property type="entry name" value="SNARE fusion complex"/>
    <property type="match status" value="2"/>
</dbReference>
<dbReference type="PROSITE" id="PS50192">
    <property type="entry name" value="T_SNARE"/>
    <property type="match status" value="2"/>
</dbReference>
<reference key="1">
    <citation type="journal article" date="1993" name="Proc. Natl. Acad. Sci. U.S.A.">
        <title>Multiple loci for synapse protein SNAP-25 in the tetraploid goldfish.</title>
        <authorList>
            <person name="Risinger C."/>
            <person name="Larhammar D."/>
        </authorList>
    </citation>
    <scope>NUCLEOTIDE SEQUENCE [MRNA]</scope>
    <source>
        <tissue>Retina</tissue>
    </source>
</reference>
<reference key="2">
    <citation type="journal article" date="2005" name="J. Neuroendocrinol.">
        <title>GABAergic modulation of the expression of genes involved in GABA synaptic transmission and stress in the hypothalamus and telencephalon of the female goldfish (Carassius auratus).</title>
        <authorList>
            <person name="Martyniuk C.J."/>
            <person name="Crawford A.B."/>
            <person name="Hogan N.S."/>
            <person name="Trudeau V.L."/>
        </authorList>
    </citation>
    <scope>NUCLEOTIDE SEQUENCE [MRNA] OF 38-203</scope>
    <source>
        <tissue>Brain</tissue>
    </source>
</reference>
<reference key="3">
    <citation type="journal article" date="1998" name="J. Neurosci. Res.">
        <title>Cloning of two loci for synapse protein Snap25 in zebrafish: comparison of paralogous linkage groups suggests loss of one locus in the mammalian lineage.</title>
        <authorList>
            <person name="Risinger C."/>
            <person name="Salaneck E."/>
            <person name="Soederberg C."/>
            <person name="Gates M."/>
            <person name="Postlethwait J.H."/>
            <person name="Larhammar D."/>
        </authorList>
    </citation>
    <scope>NOMENCLATURE</scope>
</reference>